<organism evidence="8">
    <name type="scientific">Toxoplasma gondii (strain ATCC 50611 / Me49)</name>
    <dbReference type="NCBI Taxonomy" id="508771"/>
    <lineage>
        <taxon>Eukaryota</taxon>
        <taxon>Sar</taxon>
        <taxon>Alveolata</taxon>
        <taxon>Apicomplexa</taxon>
        <taxon>Conoidasida</taxon>
        <taxon>Coccidia</taxon>
        <taxon>Eucoccidiorida</taxon>
        <taxon>Eimeriorina</taxon>
        <taxon>Sarcocystidae</taxon>
        <taxon>Toxoplasma</taxon>
    </lineage>
</organism>
<proteinExistence type="predicted"/>
<comment type="function">
    <text evidence="4">Part of the centrosome inner core complex (PubMed:36069445). Plays a role in the formation and/or stabilization of the mitotic spindle (PubMed:36069445). Required for proper nuclear segregation and DNA partitioning during cell division (PubMed:36069445).</text>
</comment>
<comment type="subcellular location">
    <subcellularLocation>
        <location evidence="2 3 4">Cytoplasm</location>
        <location evidence="2 3 4">Cytoskeleton</location>
        <location evidence="2 3 4">Microtubule organizing center</location>
        <location evidence="2 3 4">Centrosome</location>
    </subcellularLocation>
    <text evidence="3 4">Localizes to centrosome inner core (PubMed:30865554). In newly formed daughter cells, localizes adjacent to the centrioles (PubMed:36069445). Upon entry into S phase, localizes in between the duplicated pair of centrioles (PubMed:36069445). Shortly after duplication, when the two pairs of centrioles move away from each other, an oval-like shape localization bridging the centrioles localization is observed (PubMed:36069445). Later in mitosis, localizes to two distinct dots at the tips of structures formed by acetylated tubulin (PubMed:36069445).</text>
</comment>
<comment type="disruption phenotype">
    <text evidence="4">Conditional knockdown results in parasite inability to form plaques, indicating an essential role for parasite survival (PubMed:36069445). Reduced number of parasites per vacuole (PubMed:36069445). Nuclei segregation defects caused by the disconnect of the centrosome outer core and cell pellicle from the nucleus (PubMed:36069445). DNA partitioning abnormalities caused by mitotic spindle assembly defects (PubMed:36069445). No significant effects on segregation or duplication of the centrosome outer core (PubMed:36069445). No significant effects on segregation of the apicoplast or mitochondria (PubMed:36069445).</text>
</comment>
<keyword id="KW-0131">Cell cycle</keyword>
<keyword id="KW-0132">Cell division</keyword>
<keyword id="KW-0175">Coiled coil</keyword>
<keyword id="KW-0963">Cytoplasm</keyword>
<keyword id="KW-0206">Cytoskeleton</keyword>
<keyword id="KW-1185">Reference proteome</keyword>
<sequence>MESSVAVEGAGGPSTYFKGSSAALSRLVSTETTASDFCRSQLPTSRPPTDPPVSPTAEATDAFSRVSTSSRPLITGRVSTMRAASLSRSTALSASLRPRPPYDERSSSFHSECQAGEEGGPGASRRMHRSLAGSAESRAEREGSSFRLDTEKPFSRDGNIPSYAPSMSDSLKGGASGLSSPLLQRSRSDRRTGLRGESRTCDSEAASAESRFFSSSRYDPERTDRARDADLFERGSQLDSIPLSNRRPGTDPVSSEHLRESRRTVTAAVSDFLEDSRRGVYKDDQMWGFEQASFAEDKPGLAASASVRQEKLDPYLSRSSQGSSQGSGEPVSRNLRVSGEKQSSSTRAMASRHETSVLTSNSDRREERVAYLSCADEEDLASRRESEGNVQVSRESRHAVPSSQRLEPIERIHRKGGAALRESLGSRFDPKDITGRFLDSSSSEVPASARTQALGTDLHSRPRGLGSEMSSSRVAFYDSGREAGGLSSQRADGRRTGEESREGEDGRTGRKEDAVETRWGSSLGLSGESSGNTSLRRKQAEGVNETRSQATEPNGEASLFSPFGSGRMQSSEVPRRGEKQRHFSSLEISSARQEREPMAHTSVLASRPSFLPPSFSLGASETSTDRVLGGSTRPPCLEEGKPLRSELLAAELGEGGTERSTSLLHSAASPSSVSRRPRLLTAVDSPPREREDHVVPRETKTRLGDESGETRHALNRPAGLHGSTGFGVEASADLRGESGGRSSDGSRIRSSSSSAVSHLSQVSLPPLPRGRAGDEALSREEESGGRSGRQKRDREATLLHASSIFRSTVPLRPSVRSFSQPAASAGSDVVSPRSRHARDFDSLSRVAKTPQTEVGGESFRLYGKNPSSAPSALGAKETFLNSRGDDTEETNGDKDAKRGATVPAVNGGELGALPRVPAAGAEGLRGLSSRMSREVSSAYQPPQPPSAEECGASLQVSLDREQLGGNSGRSTRSNSLVSRIETGLSMPRSASGTTHASLLASNAGNAKSDTLGKGPTECVCQASRYMTRQKVHYEQQMKRVEEEREQQRQRRRILAEQEAQVALLQSQVQRQREGVVEEEKQLREMRAQLTAEREAMETRWQQLEKQHQELAEKKEKWRKTAQHKRDELQAFSHRIRADKKELDEKKKEVARDTTSLKDKVESVEKEQDRLNRERVELEEVRFALDREKAELDARISATEDERHRLKKKEEELIRRETKAQSKEDELRREQLEVEKRTQAVSLKAEEEEQKELDRVSLWRQKNEELDRRARLVHEQETDLDARTHALRMQETERKREDEREKKKLQQMQETFLEDKKSFAREKGRVEAQLDEEKKRLVEEKKTLEEARGKWEEERRREHAEFERKKKVWEEERSARVAELAAKEEAVREKEKLLEEEENRRREEMKKLTQELRDEKEQIARQLDADREDMRARLGAEREKLHEERLRGEEELQKERERLETQMEHLKEKERELEGAQNRWKEEQATVESRLREAEEKVLRDREVLAQEREAFEEEVRREREQFHEEQEAVLAEFRAQRQMAERELAEQKEQQEEMLEEERQRLLQAEERQQETYAEQMNQLRNLEEQLHQQKLHHQQDVSRHLEREEALFERERRLREEDQSVQDEKQKLSKEKQAVGQQWRQLEETQSQQKQEEASLKKEREALEDKTRDLRDQVQRVAEVDEKLARLREAEDALEIERAALEAEKESFRREKELIDAQVGAWRRKLSQREQEVGRRERAASTRLRDIETQEKVHRVRMEEDGNVVNRGVKQTASGALTIRRGPSLASGRAPSVSRQPLARERGGDTVTREEAAKEREEKKPGTNARTRCLSTERRREQKGNVSAGGPKVSAGRRTVTPAEDHGRGRSATKRGQDAGGREGEEGETKSANGDGGRNRKRPGAAVRESSSGDQHTTGGKNGKEFGKRNGVDRVSGLLPALRGQKSVAAVSSTRASSVACDGDEHETETERSIQGTTKSPTQALLSSPDRSDLPPQKSAPFSLSGSPQVSLATKGLTEHTRGASDRAEEGEEEAERKDRNRGRLLHSSRTTAEAKPSSQLHRTPFLDEEESVSSVSAGRTRAGESVPEATERGRRKEQREQGDSERKTESGSSRGVVDGSGSARVWENRERRSRLESEERQEDRRRETGEDEVVFQNIFEPGNSSTFARETFPRISHLAASRQSCSSSGLSHPLPASSASRQSPEKAGRASSSTYSPYTFRYSSFLKQQASSLTEEGDREGEEAKRRNPSNEPEMSGSPCLSFAEKSSASEGRPFSSRCPELLPTSASPERQAEDDGKQATRVSPSFSSQSSLCVSPVSLNGLSLGTLDRSRVTRSQETLEEGENEVSATRDVGARNGGQAEKRSTVSLNRQGPSAPSSSSFCSSYSLPQAASRISASVLRREERSMLSVERNGEDETERRRHEEHREVSVVGGGSSSLSSQTRVNEIVYRREGTGAHAKRGRGDSECVLSGKRDGFSGRETLSRTPLTSPSGVVGQERSVLSRAGCKEQEKEGRTSQASPHQLQSPRSRQAWKDRLAAACAPRTSVPLEEAEDDTEVGSPFLNSLRSQRNTRKEGESSFFSSSVYRRREEDERRSKGTLIRKNGEAGSAGSFNARESVISHLSAFNSAEDNSDCGSGENSSLSGLGSSTRISTGRGKSSLSGR</sequence>
<dbReference type="EMBL" id="KE138832">
    <property type="protein sequence ID" value="EPT28028.1"/>
    <property type="molecule type" value="Genomic_DNA"/>
</dbReference>
<dbReference type="RefSeq" id="XP_018636437.1">
    <property type="nucleotide sequence ID" value="XM_018782113.1"/>
</dbReference>
<dbReference type="SMR" id="S8F3G6"/>
<dbReference type="EnsemblProtists" id="TGME49_290620-t26_1">
    <property type="protein sequence ID" value="TGME49_290620-t26_1"/>
    <property type="gene ID" value="TGME49_290620"/>
</dbReference>
<dbReference type="GeneID" id="7896482"/>
<dbReference type="KEGG" id="tgo:TGME49_290620"/>
<dbReference type="VEuPathDB" id="ToxoDB:TGME49_290620"/>
<dbReference type="OrthoDB" id="207911at2759"/>
<dbReference type="Proteomes" id="UP000001529">
    <property type="component" value="Chromosome IX"/>
</dbReference>
<reference evidence="8" key="1">
    <citation type="submission" date="2013-04" db="EMBL/GenBank/DDBJ databases">
        <authorList>
            <person name="Sibley D."/>
            <person name="Venepally P."/>
            <person name="Karamycheva S."/>
            <person name="Hadjithomas M."/>
            <person name="Khan A."/>
            <person name="Brunk B."/>
            <person name="Roos D."/>
            <person name="Caler E."/>
            <person name="Lorenzi H."/>
        </authorList>
    </citation>
    <scope>NUCLEOTIDE SEQUENCE [LARGE SCALE GENOMIC DNA]</scope>
    <source>
        <strain evidence="8">ATCC 50611 / Me49</strain>
    </source>
</reference>
<reference key="2">
    <citation type="journal article" date="2015" name="PLoS Biol.">
        <title>A novel bipartite centrosome coordinates the apicomplexan cell cycle.</title>
        <authorList>
            <person name="Suvorova E.S."/>
            <person name="Francia M."/>
            <person name="Striepen B."/>
            <person name="White M.W."/>
        </authorList>
    </citation>
    <scope>SUBCELLULAR LOCATION</scope>
</reference>
<reference evidence="6" key="3">
    <citation type="journal article" date="2019" name="Mol. Biol. Cell">
        <title>TgCep250 is dynamically processed through the division cycle and is essential for structural integrity of the Toxoplasma centrosome.</title>
        <authorList>
            <person name="Chen C.T."/>
            <person name="Gubbels M.J."/>
        </authorList>
    </citation>
    <scope>SUBCELLULAR LOCATION</scope>
</reference>
<reference key="4">
    <citation type="journal article" date="2022" name="MBio">
        <title>Separate To Operate: the Centriole-Free Inner Core of the Centrosome Regulates the Assembly of the Intranuclear Spindle in Toxoplasma gondii.</title>
        <authorList>
            <person name="Tomasina R."/>
            <person name="Gonzalez F.C."/>
            <person name="Martins-Duarte E.S."/>
            <person name="Bastin P."/>
            <person name="Gissot M."/>
            <person name="Francia M.E."/>
        </authorList>
    </citation>
    <scope>FUNCTION</scope>
    <scope>SUBCELLULAR LOCATION</scope>
    <scope>DISRUPTION PHENOTYPE</scope>
</reference>
<feature type="chain" id="PRO_0000462219" description="Centrosome-associated protein CEP250L1">
    <location>
        <begin position="1"/>
        <end position="2662"/>
    </location>
</feature>
<feature type="coiled-coil region" evidence="1">
    <location>
        <begin position="1030"/>
        <end position="1248"/>
    </location>
</feature>
<feature type="coiled-coil region" evidence="1">
    <location>
        <begin position="1281"/>
        <end position="1719"/>
    </location>
</feature>
<name>CEPL_TOXGM</name>
<accession>S8F3G6</accession>
<protein>
    <recommendedName>
        <fullName evidence="6">Centrosome-associated protein CEP250L1</fullName>
        <shortName evidence="5">TgCep250L1</shortName>
    </recommendedName>
</protein>
<evidence type="ECO:0000255" key="1"/>
<evidence type="ECO:0000269" key="2">
    <source>
    </source>
</evidence>
<evidence type="ECO:0000269" key="3">
    <source>
    </source>
</evidence>
<evidence type="ECO:0000269" key="4">
    <source>
    </source>
</evidence>
<evidence type="ECO:0000303" key="5">
    <source>
    </source>
</evidence>
<evidence type="ECO:0000305" key="6"/>
<evidence type="ECO:0000312" key="7">
    <source>
        <dbReference type="EMBL" id="EPT28028.1"/>
    </source>
</evidence>
<evidence type="ECO:0000312" key="8">
    <source>
        <dbReference type="Proteomes" id="UP000001529"/>
    </source>
</evidence>
<gene>
    <name evidence="6" type="primary">CEP250L1</name>
    <name evidence="7" type="ORF">TGME49_290620</name>
</gene>